<reference key="1">
    <citation type="submission" date="2007-02" db="EMBL/GenBank/DDBJ databases">
        <title>Complete sequence of Clostridium thermocellum ATCC 27405.</title>
        <authorList>
            <consortium name="US DOE Joint Genome Institute"/>
            <person name="Copeland A."/>
            <person name="Lucas S."/>
            <person name="Lapidus A."/>
            <person name="Barry K."/>
            <person name="Detter J.C."/>
            <person name="Glavina del Rio T."/>
            <person name="Hammon N."/>
            <person name="Israni S."/>
            <person name="Dalin E."/>
            <person name="Tice H."/>
            <person name="Pitluck S."/>
            <person name="Chertkov O."/>
            <person name="Brettin T."/>
            <person name="Bruce D."/>
            <person name="Han C."/>
            <person name="Tapia R."/>
            <person name="Gilna P."/>
            <person name="Schmutz J."/>
            <person name="Larimer F."/>
            <person name="Land M."/>
            <person name="Hauser L."/>
            <person name="Kyrpides N."/>
            <person name="Mikhailova N."/>
            <person name="Wu J.H.D."/>
            <person name="Newcomb M."/>
            <person name="Richardson P."/>
        </authorList>
    </citation>
    <scope>NUCLEOTIDE SEQUENCE [LARGE SCALE GENOMIC DNA]</scope>
    <source>
        <strain>ATCC 27405 / DSM 1237 / JCM 9322 / NBRC 103400 / NCIMB 10682 / NRRL B-4536 / VPI 7372</strain>
    </source>
</reference>
<dbReference type="EMBL" id="CP000568">
    <property type="protein sequence ID" value="ABN52167.1"/>
    <property type="molecule type" value="Genomic_DNA"/>
</dbReference>
<dbReference type="RefSeq" id="WP_003518597.1">
    <property type="nucleotide sequence ID" value="NC_009012.1"/>
</dbReference>
<dbReference type="SMR" id="A3DDY8"/>
<dbReference type="STRING" id="203119.Cthe_0933"/>
<dbReference type="GeneID" id="35803073"/>
<dbReference type="KEGG" id="cth:Cthe_0933"/>
<dbReference type="eggNOG" id="COG0236">
    <property type="taxonomic scope" value="Bacteria"/>
</dbReference>
<dbReference type="HOGENOM" id="CLU_108696_5_6_9"/>
<dbReference type="OrthoDB" id="9804551at2"/>
<dbReference type="UniPathway" id="UPA00094"/>
<dbReference type="Proteomes" id="UP000002145">
    <property type="component" value="Chromosome"/>
</dbReference>
<dbReference type="GO" id="GO:0005829">
    <property type="term" value="C:cytosol"/>
    <property type="evidence" value="ECO:0007669"/>
    <property type="project" value="TreeGrafter"/>
</dbReference>
<dbReference type="GO" id="GO:0016020">
    <property type="term" value="C:membrane"/>
    <property type="evidence" value="ECO:0007669"/>
    <property type="project" value="GOC"/>
</dbReference>
<dbReference type="GO" id="GO:0000035">
    <property type="term" value="F:acyl binding"/>
    <property type="evidence" value="ECO:0007669"/>
    <property type="project" value="TreeGrafter"/>
</dbReference>
<dbReference type="GO" id="GO:0000036">
    <property type="term" value="F:acyl carrier activity"/>
    <property type="evidence" value="ECO:0007669"/>
    <property type="project" value="UniProtKB-UniRule"/>
</dbReference>
<dbReference type="GO" id="GO:0031177">
    <property type="term" value="F:phosphopantetheine binding"/>
    <property type="evidence" value="ECO:0007669"/>
    <property type="project" value="InterPro"/>
</dbReference>
<dbReference type="GO" id="GO:0009245">
    <property type="term" value="P:lipid A biosynthetic process"/>
    <property type="evidence" value="ECO:0007669"/>
    <property type="project" value="TreeGrafter"/>
</dbReference>
<dbReference type="FunFam" id="1.10.1200.10:FF:000006">
    <property type="entry name" value="Acyl carrier protein"/>
    <property type="match status" value="1"/>
</dbReference>
<dbReference type="Gene3D" id="1.10.1200.10">
    <property type="entry name" value="ACP-like"/>
    <property type="match status" value="1"/>
</dbReference>
<dbReference type="HAMAP" id="MF_01217">
    <property type="entry name" value="Acyl_carrier"/>
    <property type="match status" value="1"/>
</dbReference>
<dbReference type="InterPro" id="IPR003231">
    <property type="entry name" value="ACP"/>
</dbReference>
<dbReference type="InterPro" id="IPR036736">
    <property type="entry name" value="ACP-like_sf"/>
</dbReference>
<dbReference type="InterPro" id="IPR020806">
    <property type="entry name" value="PKS_PP-bd"/>
</dbReference>
<dbReference type="InterPro" id="IPR009081">
    <property type="entry name" value="PP-bd_ACP"/>
</dbReference>
<dbReference type="InterPro" id="IPR006162">
    <property type="entry name" value="Ppantetheine_attach_site"/>
</dbReference>
<dbReference type="NCBIfam" id="TIGR00517">
    <property type="entry name" value="acyl_carrier"/>
    <property type="match status" value="1"/>
</dbReference>
<dbReference type="NCBIfam" id="NF002148">
    <property type="entry name" value="PRK00982.1-2"/>
    <property type="match status" value="1"/>
</dbReference>
<dbReference type="NCBIfam" id="NF002149">
    <property type="entry name" value="PRK00982.1-3"/>
    <property type="match status" value="1"/>
</dbReference>
<dbReference type="NCBIfam" id="NF002150">
    <property type="entry name" value="PRK00982.1-4"/>
    <property type="match status" value="1"/>
</dbReference>
<dbReference type="NCBIfam" id="NF002151">
    <property type="entry name" value="PRK00982.1-5"/>
    <property type="match status" value="1"/>
</dbReference>
<dbReference type="PANTHER" id="PTHR20863">
    <property type="entry name" value="ACYL CARRIER PROTEIN"/>
    <property type="match status" value="1"/>
</dbReference>
<dbReference type="PANTHER" id="PTHR20863:SF76">
    <property type="entry name" value="CARRIER DOMAIN-CONTAINING PROTEIN"/>
    <property type="match status" value="1"/>
</dbReference>
<dbReference type="Pfam" id="PF00550">
    <property type="entry name" value="PP-binding"/>
    <property type="match status" value="1"/>
</dbReference>
<dbReference type="SMART" id="SM00823">
    <property type="entry name" value="PKS_PP"/>
    <property type="match status" value="1"/>
</dbReference>
<dbReference type="SUPFAM" id="SSF47336">
    <property type="entry name" value="ACP-like"/>
    <property type="match status" value="1"/>
</dbReference>
<dbReference type="PROSITE" id="PS50075">
    <property type="entry name" value="CARRIER"/>
    <property type="match status" value="1"/>
</dbReference>
<dbReference type="PROSITE" id="PS00012">
    <property type="entry name" value="PHOSPHOPANTETHEINE"/>
    <property type="match status" value="1"/>
</dbReference>
<comment type="function">
    <text evidence="1">Carrier of the growing fatty acid chain in fatty acid biosynthesis.</text>
</comment>
<comment type="pathway">
    <text evidence="1">Lipid metabolism; fatty acid biosynthesis.</text>
</comment>
<comment type="subcellular location">
    <subcellularLocation>
        <location evidence="1">Cytoplasm</location>
    </subcellularLocation>
</comment>
<comment type="PTM">
    <text evidence="1">4'-phosphopantetheine is transferred from CoA to a specific serine of apo-ACP by AcpS. This modification is essential for activity because fatty acids are bound in thioester linkage to the sulfhydryl of the prosthetic group.</text>
</comment>
<comment type="similarity">
    <text evidence="1">Belongs to the acyl carrier protein (ACP) family.</text>
</comment>
<evidence type="ECO:0000255" key="1">
    <source>
        <dbReference type="HAMAP-Rule" id="MF_01217"/>
    </source>
</evidence>
<evidence type="ECO:0000255" key="2">
    <source>
        <dbReference type="PROSITE-ProRule" id="PRU00258"/>
    </source>
</evidence>
<gene>
    <name evidence="1" type="primary">acpP</name>
    <name type="ordered locus">Cthe_0933</name>
</gene>
<protein>
    <recommendedName>
        <fullName evidence="1">Acyl carrier protein</fullName>
        <shortName evidence="1">ACP</shortName>
    </recommendedName>
</protein>
<name>ACP_ACET2</name>
<accession>A3DDY8</accession>
<organism>
    <name type="scientific">Acetivibrio thermocellus (strain ATCC 27405 / DSM 1237 / JCM 9322 / NBRC 103400 / NCIMB 10682 / NRRL B-4536 / VPI 7372)</name>
    <name type="common">Clostridium thermocellum</name>
    <dbReference type="NCBI Taxonomy" id="203119"/>
    <lineage>
        <taxon>Bacteria</taxon>
        <taxon>Bacillati</taxon>
        <taxon>Bacillota</taxon>
        <taxon>Clostridia</taxon>
        <taxon>Eubacteriales</taxon>
        <taxon>Oscillospiraceae</taxon>
        <taxon>Acetivibrio</taxon>
    </lineage>
</organism>
<keyword id="KW-0963">Cytoplasm</keyword>
<keyword id="KW-0275">Fatty acid biosynthesis</keyword>
<keyword id="KW-0276">Fatty acid metabolism</keyword>
<keyword id="KW-0444">Lipid biosynthesis</keyword>
<keyword id="KW-0443">Lipid metabolism</keyword>
<keyword id="KW-0596">Phosphopantetheine</keyword>
<keyword id="KW-0597">Phosphoprotein</keyword>
<keyword id="KW-1185">Reference proteome</keyword>
<proteinExistence type="inferred from homology"/>
<feature type="chain" id="PRO_1000066593" description="Acyl carrier protein">
    <location>
        <begin position="1"/>
        <end position="74"/>
    </location>
</feature>
<feature type="domain" description="Carrier" evidence="2">
    <location>
        <begin position="1"/>
        <end position="74"/>
    </location>
</feature>
<feature type="modified residue" description="O-(pantetheine 4'-phosphoryl)serine" evidence="2">
    <location>
        <position position="34"/>
    </location>
</feature>
<sequence length="74" mass="8367">MFEKVRKIIAEQLGIEEDEITMESSFIDDLGADSLDIVELIMALEEEFDLEIPDSEAEKITTVGDVVEYIKNNS</sequence>